<name>MYO1_SCHPO</name>
<feature type="chain" id="PRO_0000123479" description="Myosin-1">
    <location>
        <begin position="1"/>
        <end position="1217"/>
    </location>
</feature>
<feature type="domain" description="Myosin motor" evidence="4">
    <location>
        <begin position="40"/>
        <end position="720"/>
    </location>
</feature>
<feature type="domain" description="IQ 1">
    <location>
        <begin position="724"/>
        <end position="744"/>
    </location>
</feature>
<feature type="domain" description="IQ 2">
    <location>
        <begin position="745"/>
        <end position="770"/>
    </location>
</feature>
<feature type="domain" description="TH1" evidence="5">
    <location>
        <begin position="778"/>
        <end position="964"/>
    </location>
</feature>
<feature type="domain" description="SH3" evidence="3">
    <location>
        <begin position="1106"/>
        <end position="1165"/>
    </location>
</feature>
<feature type="region of interest" description="Disordered" evidence="6">
    <location>
        <begin position="1"/>
        <end position="26"/>
    </location>
</feature>
<feature type="region of interest" description="Actin-binding" evidence="1">
    <location>
        <begin position="409"/>
        <end position="491"/>
    </location>
</feature>
<feature type="region of interest" description="Disordered" evidence="6">
    <location>
        <begin position="961"/>
        <end position="1105"/>
    </location>
</feature>
<feature type="compositionally biased region" description="Low complexity" evidence="6">
    <location>
        <begin position="10"/>
        <end position="19"/>
    </location>
</feature>
<feature type="compositionally biased region" description="Low complexity" evidence="6">
    <location>
        <begin position="998"/>
        <end position="1013"/>
    </location>
</feature>
<feature type="compositionally biased region" description="Polar residues" evidence="6">
    <location>
        <begin position="1015"/>
        <end position="1025"/>
    </location>
</feature>
<feature type="compositionally biased region" description="Low complexity" evidence="6">
    <location>
        <begin position="1045"/>
        <end position="1075"/>
    </location>
</feature>
<feature type="compositionally biased region" description="Polar residues" evidence="6">
    <location>
        <begin position="1076"/>
        <end position="1088"/>
    </location>
</feature>
<feature type="compositionally biased region" description="Pro residues" evidence="6">
    <location>
        <begin position="1093"/>
        <end position="1103"/>
    </location>
</feature>
<feature type="binding site" evidence="2">
    <location>
        <begin position="17"/>
        <end position="24"/>
    </location>
    <ligand>
        <name>ATP</name>
        <dbReference type="ChEBI" id="CHEBI:30616"/>
    </ligand>
</feature>
<feature type="binding site" evidence="2">
    <location>
        <begin position="133"/>
        <end position="140"/>
    </location>
    <ligand>
        <name>ATP</name>
        <dbReference type="ChEBI" id="CHEBI:30616"/>
    </ligand>
</feature>
<feature type="modified residue" description="Phosphoserine" evidence="11">
    <location>
        <position position="361"/>
    </location>
</feature>
<feature type="modified residue" description="Phosphotyrosine" evidence="11">
    <location>
        <position position="363"/>
    </location>
</feature>
<feature type="modified residue" description="Phosphoserine" evidence="11">
    <location>
        <position position="742"/>
    </location>
</feature>
<feature type="modified residue" description="Phosphoserine" evidence="11">
    <location>
        <position position="782"/>
    </location>
</feature>
<feature type="modified residue" description="Phosphoserine" evidence="11">
    <location>
        <position position="1211"/>
    </location>
</feature>
<sequence>MAILKRTNRAKAATAAAPNSTGKSNGIKKAVYTSTRKKTVGVDDLTLLSKITDEEINKNLELRFRNGEIYTYIGHVLISVNPFRDLGIYTMDILKSYQGKNRLETSPHVYAIAENAYYQMKSYHENQCIIISGESGAGKTEAAKRIMQYITHVSKSVGTEIERVSEIILATNPLLESFGCAKTLRNNNSSRHGKYLEMIFNSGGVPVGAKITNYLLEKNRIVNQVRNERNFHIFYQFTKSAPQKYRDTYGIQGPENYVYTSACQCLSVDGISDEKDFQGTMNAMKVIGITEPEQDEIFRMLSIILWLGNIQFQEGQDGGSVISDKSITEFLGYLIGVPVAAIERALTIRIMQTQHGARRGSVYEVPLNPTQALAVRDALSMAIYNCLFDWIVERVNKALVTSDNSVSNSIGILDIYGFEIFENNSFEQLCINYVNEKLQQIFIELTLKTEQEEYVREQIAWTPIKYFNNKVVCDLIESKRPPGLFAAMNDAIATAHADSAAADSAFAQRLNFLSSNPHFEQRQNQFIVKHYAGDVTYSITGMTDKNKDQLATDILNLIHSSNNEFMKSIFPVAEESNSRRRPPTAGDRIKTSANDLVETLMKCQPSYIRTIKPNQTKSPNDYDQQMVLHQIKYLGLQENIRIRRAGFAYRQAFDTFAQRFAVLSGKTSYAGEYTWQGDDKSACEQILKDTNIPSSEYQMGTSKVFIKNPETLFALEDMRDKFWDTMATRIQRAWRSYVRRRSEAAACIQKLWNRNKVNMELERVRNEGTKLLQGKKQRRRYSILGSRKFYGDYLSASKPNGTLWNTCGLSQNDHVIFSMRCEVLVHKLGRTSKPSPRQLVLTKKNLYLVITKIVDQKLTQQVEKKFAVSSIDSVGLTNLQDDWVAIRNKSSQNGDMFLRCFFKTEFITTLKRINRNIQVIVGPTIQYCRKPGKVQTVKTAKDETTKDYDYYKSGTIHVGTGLPPTSKSKPFPRLATGGSTAAARGPRPVVQNKPAATKPVSMPAAKSKPAPMANPVSTAQQTQNRPPAPAMQARPNTTQAAAPVTSTTTTIKQATTVSASKPAPSTVTSAASSPSNISKPSAPVANNVSKPSAVPPPPPPPPAEVEKKDLYLALYDFAGRSPNEMTIKKDEIIEIVQKEPSGWWLALKNGAEGWVPATYVTEYKGSTPQTTASSTNVAAQANNNASPAEVNNLAGSLADALRMRASAVRGSDEEEDW</sequence>
<keyword id="KW-0009">Actin-binding</keyword>
<keyword id="KW-0067">ATP-binding</keyword>
<keyword id="KW-0963">Cytoplasm</keyword>
<keyword id="KW-0206">Cytoskeleton</keyword>
<keyword id="KW-0378">Hydrolase</keyword>
<keyword id="KW-0505">Motor protein</keyword>
<keyword id="KW-0518">Myosin</keyword>
<keyword id="KW-0547">Nucleotide-binding</keyword>
<keyword id="KW-0597">Phosphoprotein</keyword>
<keyword id="KW-1185">Reference proteome</keyword>
<keyword id="KW-0677">Repeat</keyword>
<keyword id="KW-0728">SH3 domain</keyword>
<proteinExistence type="evidence at protein level"/>
<gene>
    <name type="primary">myo1</name>
    <name type="ORF">SPBC146.13c</name>
</gene>
<accession>Q9Y7Z8</accession>
<dbReference type="EMBL" id="CU329671">
    <property type="protein sequence ID" value="CAB46766.1"/>
    <property type="molecule type" value="Genomic_DNA"/>
</dbReference>
<dbReference type="PIR" id="T39427">
    <property type="entry name" value="T39427"/>
</dbReference>
<dbReference type="RefSeq" id="NP_595402.1">
    <property type="nucleotide sequence ID" value="NM_001021309.2"/>
</dbReference>
<dbReference type="SMR" id="Q9Y7Z8"/>
<dbReference type="BioGRID" id="276214">
    <property type="interactions" value="29"/>
</dbReference>
<dbReference type="FunCoup" id="Q9Y7Z8">
    <property type="interactions" value="119"/>
</dbReference>
<dbReference type="IntAct" id="Q9Y7Z8">
    <property type="interactions" value="10"/>
</dbReference>
<dbReference type="STRING" id="284812.Q9Y7Z8"/>
<dbReference type="iPTMnet" id="Q9Y7Z8"/>
<dbReference type="PaxDb" id="4896-SPBC146.13c.1"/>
<dbReference type="EnsemblFungi" id="SPBC146.13c.1">
    <property type="protein sequence ID" value="SPBC146.13c.1:pep"/>
    <property type="gene ID" value="SPBC146.13c"/>
</dbReference>
<dbReference type="GeneID" id="2539659"/>
<dbReference type="KEGG" id="spo:2539659"/>
<dbReference type="PomBase" id="SPBC146.13c">
    <property type="gene designation" value="myo1"/>
</dbReference>
<dbReference type="VEuPathDB" id="FungiDB:SPBC146.13c"/>
<dbReference type="eggNOG" id="KOG0162">
    <property type="taxonomic scope" value="Eukaryota"/>
</dbReference>
<dbReference type="HOGENOM" id="CLU_000192_7_6_1"/>
<dbReference type="InParanoid" id="Q9Y7Z8"/>
<dbReference type="OMA" id="PPEEYQM"/>
<dbReference type="PhylomeDB" id="Q9Y7Z8"/>
<dbReference type="PRO" id="PR:Q9Y7Z8"/>
<dbReference type="Proteomes" id="UP000002485">
    <property type="component" value="Chromosome II"/>
</dbReference>
<dbReference type="GO" id="GO:0030479">
    <property type="term" value="C:actin cortical patch"/>
    <property type="evidence" value="ECO:0000314"/>
    <property type="project" value="PomBase"/>
</dbReference>
<dbReference type="GO" id="GO:0015629">
    <property type="term" value="C:actin cytoskeleton"/>
    <property type="evidence" value="ECO:0000318"/>
    <property type="project" value="GO_Central"/>
</dbReference>
<dbReference type="GO" id="GO:0051285">
    <property type="term" value="C:cell cortex of cell tip"/>
    <property type="evidence" value="ECO:0000314"/>
    <property type="project" value="PomBase"/>
</dbReference>
<dbReference type="GO" id="GO:0032153">
    <property type="term" value="C:cell division site"/>
    <property type="evidence" value="ECO:0000314"/>
    <property type="project" value="PomBase"/>
</dbReference>
<dbReference type="GO" id="GO:0051286">
    <property type="term" value="C:cell tip"/>
    <property type="evidence" value="ECO:0000314"/>
    <property type="project" value="PomBase"/>
</dbReference>
<dbReference type="GO" id="GO:0005737">
    <property type="term" value="C:cytoplasm"/>
    <property type="evidence" value="ECO:0007005"/>
    <property type="project" value="PomBase"/>
</dbReference>
<dbReference type="GO" id="GO:0061645">
    <property type="term" value="C:endocytic patch"/>
    <property type="evidence" value="ECO:0000269"/>
    <property type="project" value="PomBase"/>
</dbReference>
<dbReference type="GO" id="GO:0043332">
    <property type="term" value="C:mating projection tip"/>
    <property type="evidence" value="ECO:0000314"/>
    <property type="project" value="PomBase"/>
</dbReference>
<dbReference type="GO" id="GO:0031097">
    <property type="term" value="C:medial cortex"/>
    <property type="evidence" value="ECO:0000314"/>
    <property type="project" value="PomBase"/>
</dbReference>
<dbReference type="GO" id="GO:0045160">
    <property type="term" value="C:myosin I complex"/>
    <property type="evidence" value="ECO:0000353"/>
    <property type="project" value="PomBase"/>
</dbReference>
<dbReference type="GO" id="GO:0005886">
    <property type="term" value="C:plasma membrane"/>
    <property type="evidence" value="ECO:0000269"/>
    <property type="project" value="PomBase"/>
</dbReference>
<dbReference type="GO" id="GO:0044853">
    <property type="term" value="C:plasma membrane raft"/>
    <property type="evidence" value="ECO:0000314"/>
    <property type="project" value="PomBase"/>
</dbReference>
<dbReference type="GO" id="GO:0005628">
    <property type="term" value="C:prospore membrane"/>
    <property type="evidence" value="ECO:0000314"/>
    <property type="project" value="PomBase"/>
</dbReference>
<dbReference type="GO" id="GO:0051015">
    <property type="term" value="F:actin filament binding"/>
    <property type="evidence" value="ECO:0000314"/>
    <property type="project" value="PomBase"/>
</dbReference>
<dbReference type="GO" id="GO:0071933">
    <property type="term" value="F:Arp2/3 complex binding"/>
    <property type="evidence" value="ECO:0000314"/>
    <property type="project" value="PomBase"/>
</dbReference>
<dbReference type="GO" id="GO:0005524">
    <property type="term" value="F:ATP binding"/>
    <property type="evidence" value="ECO:0007669"/>
    <property type="project" value="UniProtKB-KW"/>
</dbReference>
<dbReference type="GO" id="GO:0016887">
    <property type="term" value="F:ATP hydrolysis activity"/>
    <property type="evidence" value="ECO:0000305"/>
    <property type="project" value="PomBase"/>
</dbReference>
<dbReference type="GO" id="GO:0008289">
    <property type="term" value="F:lipid binding"/>
    <property type="evidence" value="ECO:0000269"/>
    <property type="project" value="PomBase"/>
</dbReference>
<dbReference type="GO" id="GO:0000146">
    <property type="term" value="F:microfilament motor activity"/>
    <property type="evidence" value="ECO:0000314"/>
    <property type="project" value="PomBase"/>
</dbReference>
<dbReference type="GO" id="GO:0005543">
    <property type="term" value="F:phospholipid binding"/>
    <property type="evidence" value="ECO:0000304"/>
    <property type="project" value="PomBase"/>
</dbReference>
<dbReference type="GO" id="GO:0000147">
    <property type="term" value="P:actin cortical patch assembly"/>
    <property type="evidence" value="ECO:0000315"/>
    <property type="project" value="PomBase"/>
</dbReference>
<dbReference type="GO" id="GO:0051666">
    <property type="term" value="P:actin cortical patch localization"/>
    <property type="evidence" value="ECO:0000318"/>
    <property type="project" value="GO_Central"/>
</dbReference>
<dbReference type="GO" id="GO:0007015">
    <property type="term" value="P:actin filament organization"/>
    <property type="evidence" value="ECO:0000318"/>
    <property type="project" value="GO_Central"/>
</dbReference>
<dbReference type="GO" id="GO:0030989">
    <property type="term" value="P:dynein-driven meiotic oscillatory nuclear movement"/>
    <property type="evidence" value="ECO:0000269"/>
    <property type="project" value="PomBase"/>
</dbReference>
<dbReference type="GO" id="GO:0006897">
    <property type="term" value="P:endocytosis"/>
    <property type="evidence" value="ECO:0000315"/>
    <property type="project" value="PomBase"/>
</dbReference>
<dbReference type="GO" id="GO:0000281">
    <property type="term" value="P:mitotic cytokinesis"/>
    <property type="evidence" value="ECO:0000315"/>
    <property type="project" value="PomBase"/>
</dbReference>
<dbReference type="CDD" id="cd01378">
    <property type="entry name" value="MYSc_Myo1"/>
    <property type="match status" value="1"/>
</dbReference>
<dbReference type="CDD" id="cd11858">
    <property type="entry name" value="SH3_Myosin-I_fungi"/>
    <property type="match status" value="1"/>
</dbReference>
<dbReference type="FunFam" id="1.10.10.820:FF:000001">
    <property type="entry name" value="Myosin heavy chain"/>
    <property type="match status" value="1"/>
</dbReference>
<dbReference type="FunFam" id="1.20.120.720:FF:000015">
    <property type="entry name" value="Myosin I"/>
    <property type="match status" value="1"/>
</dbReference>
<dbReference type="FunFam" id="1.20.5.4820:FF:000004">
    <property type="entry name" value="Myosin IE"/>
    <property type="match status" value="1"/>
</dbReference>
<dbReference type="FunFam" id="1.20.58.530:FF:000007">
    <property type="entry name" value="Myosin IE"/>
    <property type="match status" value="1"/>
</dbReference>
<dbReference type="Gene3D" id="1.10.10.820">
    <property type="match status" value="1"/>
</dbReference>
<dbReference type="Gene3D" id="1.20.5.4820">
    <property type="match status" value="1"/>
</dbReference>
<dbReference type="Gene3D" id="1.20.58.530">
    <property type="match status" value="1"/>
</dbReference>
<dbReference type="Gene3D" id="3.40.850.10">
    <property type="entry name" value="Kinesin motor domain"/>
    <property type="match status" value="1"/>
</dbReference>
<dbReference type="Gene3D" id="1.20.120.720">
    <property type="entry name" value="Myosin VI head, motor domain, U50 subdomain"/>
    <property type="match status" value="1"/>
</dbReference>
<dbReference type="Gene3D" id="2.30.30.40">
    <property type="entry name" value="SH3 Domains"/>
    <property type="match status" value="1"/>
</dbReference>
<dbReference type="InterPro" id="IPR035535">
    <property type="entry name" value="Fungal_myosin-I_SH3"/>
</dbReference>
<dbReference type="InterPro" id="IPR036961">
    <property type="entry name" value="Kinesin_motor_dom_sf"/>
</dbReference>
<dbReference type="InterPro" id="IPR054489">
    <property type="entry name" value="Myo1_CA"/>
</dbReference>
<dbReference type="InterPro" id="IPR001609">
    <property type="entry name" value="Myosin_head_motor_dom-like"/>
</dbReference>
<dbReference type="InterPro" id="IPR010926">
    <property type="entry name" value="Myosin_TH1"/>
</dbReference>
<dbReference type="InterPro" id="IPR036072">
    <property type="entry name" value="MYSc_Myo1"/>
</dbReference>
<dbReference type="InterPro" id="IPR027417">
    <property type="entry name" value="P-loop_NTPase"/>
</dbReference>
<dbReference type="InterPro" id="IPR036028">
    <property type="entry name" value="SH3-like_dom_sf"/>
</dbReference>
<dbReference type="InterPro" id="IPR001452">
    <property type="entry name" value="SH3_domain"/>
</dbReference>
<dbReference type="PANTHER" id="PTHR13140">
    <property type="entry name" value="MYOSIN"/>
    <property type="match status" value="1"/>
</dbReference>
<dbReference type="PANTHER" id="PTHR13140:SF837">
    <property type="entry name" value="MYOSIN-3-RELATED"/>
    <property type="match status" value="1"/>
</dbReference>
<dbReference type="Pfam" id="PF22773">
    <property type="entry name" value="Myo1_CA"/>
    <property type="match status" value="1"/>
</dbReference>
<dbReference type="Pfam" id="PF00063">
    <property type="entry name" value="Myosin_head"/>
    <property type="match status" value="1"/>
</dbReference>
<dbReference type="Pfam" id="PF06017">
    <property type="entry name" value="Myosin_TH1"/>
    <property type="match status" value="1"/>
</dbReference>
<dbReference type="Pfam" id="PF00018">
    <property type="entry name" value="SH3_1"/>
    <property type="match status" value="1"/>
</dbReference>
<dbReference type="PRINTS" id="PR00193">
    <property type="entry name" value="MYOSINHEAVY"/>
</dbReference>
<dbReference type="SMART" id="SM00242">
    <property type="entry name" value="MYSc"/>
    <property type="match status" value="1"/>
</dbReference>
<dbReference type="SMART" id="SM00326">
    <property type="entry name" value="SH3"/>
    <property type="match status" value="1"/>
</dbReference>
<dbReference type="SUPFAM" id="SSF52540">
    <property type="entry name" value="P-loop containing nucleoside triphosphate hydrolases"/>
    <property type="match status" value="1"/>
</dbReference>
<dbReference type="SUPFAM" id="SSF50044">
    <property type="entry name" value="SH3-domain"/>
    <property type="match status" value="1"/>
</dbReference>
<dbReference type="PROSITE" id="PS51456">
    <property type="entry name" value="MYOSIN_MOTOR"/>
    <property type="match status" value="1"/>
</dbReference>
<dbReference type="PROSITE" id="PS50002">
    <property type="entry name" value="SH3"/>
    <property type="match status" value="1"/>
</dbReference>
<dbReference type="PROSITE" id="PS51757">
    <property type="entry name" value="TH1"/>
    <property type="match status" value="1"/>
</dbReference>
<organism>
    <name type="scientific">Schizosaccharomyces pombe (strain 972 / ATCC 24843)</name>
    <name type="common">Fission yeast</name>
    <dbReference type="NCBI Taxonomy" id="284812"/>
    <lineage>
        <taxon>Eukaryota</taxon>
        <taxon>Fungi</taxon>
        <taxon>Dikarya</taxon>
        <taxon>Ascomycota</taxon>
        <taxon>Taphrinomycotina</taxon>
        <taxon>Schizosaccharomycetes</taxon>
        <taxon>Schizosaccharomycetales</taxon>
        <taxon>Schizosaccharomycetaceae</taxon>
        <taxon>Schizosaccharomyces</taxon>
    </lineage>
</organism>
<reference key="1">
    <citation type="journal article" date="2002" name="Nature">
        <title>The genome sequence of Schizosaccharomyces pombe.</title>
        <authorList>
            <person name="Wood V."/>
            <person name="Gwilliam R."/>
            <person name="Rajandream M.A."/>
            <person name="Lyne M.H."/>
            <person name="Lyne R."/>
            <person name="Stewart A."/>
            <person name="Sgouros J.G."/>
            <person name="Peat N."/>
            <person name="Hayles J."/>
            <person name="Baker S.G."/>
            <person name="Basham D."/>
            <person name="Bowman S."/>
            <person name="Brooks K."/>
            <person name="Brown D."/>
            <person name="Brown S."/>
            <person name="Chillingworth T."/>
            <person name="Churcher C.M."/>
            <person name="Collins M."/>
            <person name="Connor R."/>
            <person name="Cronin A."/>
            <person name="Davis P."/>
            <person name="Feltwell T."/>
            <person name="Fraser A."/>
            <person name="Gentles S."/>
            <person name="Goble A."/>
            <person name="Hamlin N."/>
            <person name="Harris D.E."/>
            <person name="Hidalgo J."/>
            <person name="Hodgson G."/>
            <person name="Holroyd S."/>
            <person name="Hornsby T."/>
            <person name="Howarth S."/>
            <person name="Huckle E.J."/>
            <person name="Hunt S."/>
            <person name="Jagels K."/>
            <person name="James K.D."/>
            <person name="Jones L."/>
            <person name="Jones M."/>
            <person name="Leather S."/>
            <person name="McDonald S."/>
            <person name="McLean J."/>
            <person name="Mooney P."/>
            <person name="Moule S."/>
            <person name="Mungall K.L."/>
            <person name="Murphy L.D."/>
            <person name="Niblett D."/>
            <person name="Odell C."/>
            <person name="Oliver K."/>
            <person name="O'Neil S."/>
            <person name="Pearson D."/>
            <person name="Quail M.A."/>
            <person name="Rabbinowitsch E."/>
            <person name="Rutherford K.M."/>
            <person name="Rutter S."/>
            <person name="Saunders D."/>
            <person name="Seeger K."/>
            <person name="Sharp S."/>
            <person name="Skelton J."/>
            <person name="Simmonds M.N."/>
            <person name="Squares R."/>
            <person name="Squares S."/>
            <person name="Stevens K."/>
            <person name="Taylor K."/>
            <person name="Taylor R.G."/>
            <person name="Tivey A."/>
            <person name="Walsh S.V."/>
            <person name="Warren T."/>
            <person name="Whitehead S."/>
            <person name="Woodward J.R."/>
            <person name="Volckaert G."/>
            <person name="Aert R."/>
            <person name="Robben J."/>
            <person name="Grymonprez B."/>
            <person name="Weltjens I."/>
            <person name="Vanstreels E."/>
            <person name="Rieger M."/>
            <person name="Schaefer M."/>
            <person name="Mueller-Auer S."/>
            <person name="Gabel C."/>
            <person name="Fuchs M."/>
            <person name="Duesterhoeft A."/>
            <person name="Fritzc C."/>
            <person name="Holzer E."/>
            <person name="Moestl D."/>
            <person name="Hilbert H."/>
            <person name="Borzym K."/>
            <person name="Langer I."/>
            <person name="Beck A."/>
            <person name="Lehrach H."/>
            <person name="Reinhardt R."/>
            <person name="Pohl T.M."/>
            <person name="Eger P."/>
            <person name="Zimmermann W."/>
            <person name="Wedler H."/>
            <person name="Wambutt R."/>
            <person name="Purnelle B."/>
            <person name="Goffeau A."/>
            <person name="Cadieu E."/>
            <person name="Dreano S."/>
            <person name="Gloux S."/>
            <person name="Lelaure V."/>
            <person name="Mottier S."/>
            <person name="Galibert F."/>
            <person name="Aves S.J."/>
            <person name="Xiang Z."/>
            <person name="Hunt C."/>
            <person name="Moore K."/>
            <person name="Hurst S.M."/>
            <person name="Lucas M."/>
            <person name="Rochet M."/>
            <person name="Gaillardin C."/>
            <person name="Tallada V.A."/>
            <person name="Garzon A."/>
            <person name="Thode G."/>
            <person name="Daga R.R."/>
            <person name="Cruzado L."/>
            <person name="Jimenez J."/>
            <person name="Sanchez M."/>
            <person name="del Rey F."/>
            <person name="Benito J."/>
            <person name="Dominguez A."/>
            <person name="Revuelta J.L."/>
            <person name="Moreno S."/>
            <person name="Armstrong J."/>
            <person name="Forsburg S.L."/>
            <person name="Cerutti L."/>
            <person name="Lowe T."/>
            <person name="McCombie W.R."/>
            <person name="Paulsen I."/>
            <person name="Potashkin J."/>
            <person name="Shpakovski G.V."/>
            <person name="Ussery D."/>
            <person name="Barrell B.G."/>
            <person name="Nurse P."/>
        </authorList>
    </citation>
    <scope>NUCLEOTIDE SEQUENCE [LARGE SCALE GENOMIC DNA]</scope>
    <source>
        <strain>972 / ATCC 24843</strain>
    </source>
</reference>
<reference key="2">
    <citation type="journal article" date="2000" name="J. Cell Biol.">
        <title>Fission yeast myosin-I, Myo1p, stimulates actin assembly by Arp2/3 complex and shares functions with WASp.</title>
        <authorList>
            <person name="Lee W.-L."/>
            <person name="Bezanilla M."/>
            <person name="Pollard T.D."/>
        </authorList>
    </citation>
    <scope>FUNCTION</scope>
    <scope>SUBCELLULAR LOCATION</scope>
</reference>
<reference key="3">
    <citation type="journal article" date="2004" name="J. Cell Biol.">
        <title>UCS protein Rng3p activates actin filament gliding by fission yeast myosin-II.</title>
        <authorList>
            <person name="Lord M."/>
            <person name="Pollard T.D."/>
        </authorList>
    </citation>
    <scope>INTERACTION WITH CAM2</scope>
</reference>
<reference key="4">
    <citation type="journal article" date="2005" name="Curr. Biol.">
        <title>Role of fission yeast myosin I in organization of sterol-rich membrane domains.</title>
        <authorList>
            <person name="Takeda T."/>
            <person name="Chang F."/>
        </authorList>
    </citation>
    <scope>FUNCTION</scope>
    <scope>SUBCELLULAR LOCATION</scope>
</reference>
<reference key="5">
    <citation type="journal article" date="2005" name="J. Cell Biol.">
        <title>Interactions of WASp, myosin-I, and verprolin with Arp2/3 complex during actin patch assembly in fission yeast.</title>
        <authorList>
            <person name="Sirotkin V."/>
            <person name="Beltzner C.C."/>
            <person name="Marchand J.-B."/>
            <person name="Pollard T.D."/>
        </authorList>
    </citation>
    <scope>FUNCTION</scope>
    <scope>SUBCELLULAR LOCATION</scope>
    <scope>INTERACTION WITH VRP1</scope>
</reference>
<reference key="6">
    <citation type="journal article" date="2008" name="J. Proteome Res.">
        <title>Phosphoproteome analysis of fission yeast.</title>
        <authorList>
            <person name="Wilson-Grady J.T."/>
            <person name="Villen J."/>
            <person name="Gygi S.P."/>
        </authorList>
    </citation>
    <scope>PHOSPHORYLATION [LARGE SCALE ANALYSIS] AT SER-361; TYR-363; SER-742; SER-782 AND SER-1211</scope>
    <scope>IDENTIFICATION BY MASS SPECTROMETRY</scope>
</reference>
<protein>
    <recommendedName>
        <fullName>Myosin-1</fullName>
    </recommendedName>
    <alternativeName>
        <fullName>Class I unconventional myosin</fullName>
    </alternativeName>
    <alternativeName>
        <fullName>Type I myosin</fullName>
    </alternativeName>
</protein>
<comment type="function">
    <text evidence="7 9 10">Type-I myosin implicated in the organization of the actin cytoskeleton. Required for proper actin cytoskeleton polarization. At the cell cortex, assembles in patch-like structures together with proteins from the actin-polymerizing machinery and promotes actin assembly. Functions as actin nucleation-promoting factor (NPF) for the Arp2/3 complex. Contributes to proper septation by transporting vesicles containing septal material to the division site and is involved in the formation of sterol-rich membrane domains at the cell division site. Required also for mating.</text>
</comment>
<comment type="subunit">
    <text evidence="8 10">Interacts with cam2. Interacts (via SH3 domain) with vrp1.</text>
</comment>
<comment type="interaction">
    <interactant intactId="EBI-1148082">
        <id>Q9Y7Z8</id>
    </interactant>
    <interactant intactId="EBI-1148185">
        <id>Q09822</id>
        <label>cdc15</label>
    </interactant>
    <organismsDiffer>false</organismsDiffer>
    <experiments>4</experiments>
</comment>
<comment type="interaction">
    <interactant intactId="EBI-1148082">
        <id>Q9Y7Z8</id>
    </interactant>
    <interactant intactId="EBI-1148109">
        <id>O36027</id>
        <label>wsp1</label>
    </interactant>
    <organismsDiffer>false</organismsDiffer>
    <experiments>4</experiments>
</comment>
<comment type="subcellular location">
    <subcellularLocation>
        <location evidence="7 9 10">Cytoplasm</location>
        <location evidence="7 9 10">Cytoskeleton</location>
        <location evidence="7 9 10">Actin patch</location>
    </subcellularLocation>
    <text>Localizes to cortical patches at the tips of growing cells and at sites of cell division.</text>
</comment>
<comment type="domain">
    <text evidence="1">The myosin motor domain displays actin-stimulated ATPase activity and generates a mechanochemical force.</text>
</comment>
<comment type="domain">
    <text evidence="1">The tail domain participates in molecular interactions that specify the role of the motor domain (By similarity). It is composed of several tail homology (TH) domains, namely a putative phospholipid-binding myosin tail domain (also named TH1), an Ala- and Pro-rich domain (TH2), followed by an SH3 domain and a C-terminal acidic domain (TH3).</text>
</comment>
<comment type="PTM">
    <text evidence="1">Phosphorylation of the TEDS site (Ser-361) is required for the polarization of the actin cytoskeleton. Phosphorylation probably activates the myosin-I ATPase activity (By similarity).</text>
</comment>
<comment type="similarity">
    <text evidence="12">Belongs to the TRAFAC class myosin-kinesin ATPase superfamily. Myosin family.</text>
</comment>
<evidence type="ECO:0000250" key="1"/>
<evidence type="ECO:0000255" key="2"/>
<evidence type="ECO:0000255" key="3">
    <source>
        <dbReference type="PROSITE-ProRule" id="PRU00192"/>
    </source>
</evidence>
<evidence type="ECO:0000255" key="4">
    <source>
        <dbReference type="PROSITE-ProRule" id="PRU00782"/>
    </source>
</evidence>
<evidence type="ECO:0000255" key="5">
    <source>
        <dbReference type="PROSITE-ProRule" id="PRU01093"/>
    </source>
</evidence>
<evidence type="ECO:0000256" key="6">
    <source>
        <dbReference type="SAM" id="MobiDB-lite"/>
    </source>
</evidence>
<evidence type="ECO:0000269" key="7">
    <source>
    </source>
</evidence>
<evidence type="ECO:0000269" key="8">
    <source>
    </source>
</evidence>
<evidence type="ECO:0000269" key="9">
    <source>
    </source>
</evidence>
<evidence type="ECO:0000269" key="10">
    <source>
    </source>
</evidence>
<evidence type="ECO:0000269" key="11">
    <source>
    </source>
</evidence>
<evidence type="ECO:0000305" key="12"/>